<keyword id="KW-0687">Ribonucleoprotein</keyword>
<keyword id="KW-0689">Ribosomal protein</keyword>
<keyword id="KW-0694">RNA-binding</keyword>
<keyword id="KW-0699">rRNA-binding</keyword>
<keyword id="KW-0820">tRNA-binding</keyword>
<proteinExistence type="inferred from homology"/>
<name>RS7_METPB</name>
<organism>
    <name type="scientific">Methylorubrum populi (strain ATCC BAA-705 / NCIMB 13946 / BJ001)</name>
    <name type="common">Methylobacterium populi</name>
    <dbReference type="NCBI Taxonomy" id="441620"/>
    <lineage>
        <taxon>Bacteria</taxon>
        <taxon>Pseudomonadati</taxon>
        <taxon>Pseudomonadota</taxon>
        <taxon>Alphaproteobacteria</taxon>
        <taxon>Hyphomicrobiales</taxon>
        <taxon>Methylobacteriaceae</taxon>
        <taxon>Methylorubrum</taxon>
    </lineage>
</organism>
<evidence type="ECO:0000255" key="1">
    <source>
        <dbReference type="HAMAP-Rule" id="MF_00480"/>
    </source>
</evidence>
<evidence type="ECO:0000305" key="2"/>
<feature type="chain" id="PRO_1000125967" description="Small ribosomal subunit protein uS7">
    <location>
        <begin position="1"/>
        <end position="156"/>
    </location>
</feature>
<dbReference type="EMBL" id="CP001029">
    <property type="protein sequence ID" value="ACB80281.1"/>
    <property type="molecule type" value="Genomic_DNA"/>
</dbReference>
<dbReference type="RefSeq" id="WP_012454023.1">
    <property type="nucleotide sequence ID" value="NC_010725.1"/>
</dbReference>
<dbReference type="SMR" id="B1ZLK0"/>
<dbReference type="STRING" id="441620.Mpop_2119"/>
<dbReference type="KEGG" id="mpo:Mpop_2119"/>
<dbReference type="eggNOG" id="COG0049">
    <property type="taxonomic scope" value="Bacteria"/>
</dbReference>
<dbReference type="HOGENOM" id="CLU_072226_1_1_5"/>
<dbReference type="OrthoDB" id="9807653at2"/>
<dbReference type="Proteomes" id="UP000007136">
    <property type="component" value="Chromosome"/>
</dbReference>
<dbReference type="GO" id="GO:0015935">
    <property type="term" value="C:small ribosomal subunit"/>
    <property type="evidence" value="ECO:0007669"/>
    <property type="project" value="InterPro"/>
</dbReference>
<dbReference type="GO" id="GO:0019843">
    <property type="term" value="F:rRNA binding"/>
    <property type="evidence" value="ECO:0007669"/>
    <property type="project" value="UniProtKB-UniRule"/>
</dbReference>
<dbReference type="GO" id="GO:0003735">
    <property type="term" value="F:structural constituent of ribosome"/>
    <property type="evidence" value="ECO:0007669"/>
    <property type="project" value="InterPro"/>
</dbReference>
<dbReference type="GO" id="GO:0000049">
    <property type="term" value="F:tRNA binding"/>
    <property type="evidence" value="ECO:0007669"/>
    <property type="project" value="UniProtKB-UniRule"/>
</dbReference>
<dbReference type="GO" id="GO:0006412">
    <property type="term" value="P:translation"/>
    <property type="evidence" value="ECO:0007669"/>
    <property type="project" value="UniProtKB-UniRule"/>
</dbReference>
<dbReference type="CDD" id="cd14869">
    <property type="entry name" value="uS7_Bacteria"/>
    <property type="match status" value="1"/>
</dbReference>
<dbReference type="FunFam" id="1.10.455.10:FF:000001">
    <property type="entry name" value="30S ribosomal protein S7"/>
    <property type="match status" value="1"/>
</dbReference>
<dbReference type="Gene3D" id="1.10.455.10">
    <property type="entry name" value="Ribosomal protein S7 domain"/>
    <property type="match status" value="1"/>
</dbReference>
<dbReference type="HAMAP" id="MF_00480_B">
    <property type="entry name" value="Ribosomal_uS7_B"/>
    <property type="match status" value="1"/>
</dbReference>
<dbReference type="InterPro" id="IPR000235">
    <property type="entry name" value="Ribosomal_uS7"/>
</dbReference>
<dbReference type="InterPro" id="IPR005717">
    <property type="entry name" value="Ribosomal_uS7_bac/org-type"/>
</dbReference>
<dbReference type="InterPro" id="IPR020606">
    <property type="entry name" value="Ribosomal_uS7_CS"/>
</dbReference>
<dbReference type="InterPro" id="IPR023798">
    <property type="entry name" value="Ribosomal_uS7_dom"/>
</dbReference>
<dbReference type="InterPro" id="IPR036823">
    <property type="entry name" value="Ribosomal_uS7_dom_sf"/>
</dbReference>
<dbReference type="NCBIfam" id="TIGR01029">
    <property type="entry name" value="rpsG_bact"/>
    <property type="match status" value="1"/>
</dbReference>
<dbReference type="PANTHER" id="PTHR11205">
    <property type="entry name" value="RIBOSOMAL PROTEIN S7"/>
    <property type="match status" value="1"/>
</dbReference>
<dbReference type="Pfam" id="PF00177">
    <property type="entry name" value="Ribosomal_S7"/>
    <property type="match status" value="1"/>
</dbReference>
<dbReference type="PIRSF" id="PIRSF002122">
    <property type="entry name" value="RPS7p_RPS7a_RPS5e_RPS7o"/>
    <property type="match status" value="1"/>
</dbReference>
<dbReference type="SUPFAM" id="SSF47973">
    <property type="entry name" value="Ribosomal protein S7"/>
    <property type="match status" value="1"/>
</dbReference>
<dbReference type="PROSITE" id="PS00052">
    <property type="entry name" value="RIBOSOMAL_S7"/>
    <property type="match status" value="1"/>
</dbReference>
<sequence>MSRRHSAEKREIIPDAKYGDVVLTKFMNSIMYEGKKSTAERIVYGAFDLVESRARANPIEVFRAALDNVAPAIEVRSRRVGGATYQVPVEVRTERRQALAIRWLIQAARGRNDRTMVERLSAELLDAANNRGNAVKKREDTHRMAEANRAFSHYRW</sequence>
<comment type="function">
    <text evidence="1">One of the primary rRNA binding proteins, it binds directly to 16S rRNA where it nucleates assembly of the head domain of the 30S subunit. Is located at the subunit interface close to the decoding center, probably blocks exit of the E-site tRNA.</text>
</comment>
<comment type="subunit">
    <text evidence="1">Part of the 30S ribosomal subunit. Contacts proteins S9 and S11.</text>
</comment>
<comment type="similarity">
    <text evidence="1">Belongs to the universal ribosomal protein uS7 family.</text>
</comment>
<reference key="1">
    <citation type="submission" date="2008-04" db="EMBL/GenBank/DDBJ databases">
        <title>Complete sequence of chromosome of Methylobacterium populi BJ001.</title>
        <authorList>
            <consortium name="US DOE Joint Genome Institute"/>
            <person name="Copeland A."/>
            <person name="Lucas S."/>
            <person name="Lapidus A."/>
            <person name="Glavina del Rio T."/>
            <person name="Dalin E."/>
            <person name="Tice H."/>
            <person name="Bruce D."/>
            <person name="Goodwin L."/>
            <person name="Pitluck S."/>
            <person name="Chertkov O."/>
            <person name="Brettin T."/>
            <person name="Detter J.C."/>
            <person name="Han C."/>
            <person name="Kuske C.R."/>
            <person name="Schmutz J."/>
            <person name="Larimer F."/>
            <person name="Land M."/>
            <person name="Hauser L."/>
            <person name="Kyrpides N."/>
            <person name="Mikhailova N."/>
            <person name="Marx C."/>
            <person name="Richardson P."/>
        </authorList>
    </citation>
    <scope>NUCLEOTIDE SEQUENCE [LARGE SCALE GENOMIC DNA]</scope>
    <source>
        <strain>ATCC BAA-705 / NCIMB 13946 / BJ001</strain>
    </source>
</reference>
<accession>B1ZLK0</accession>
<protein>
    <recommendedName>
        <fullName evidence="1">Small ribosomal subunit protein uS7</fullName>
    </recommendedName>
    <alternativeName>
        <fullName evidence="2">30S ribosomal protein S7</fullName>
    </alternativeName>
</protein>
<gene>
    <name evidence="1" type="primary">rpsG</name>
    <name type="ordered locus">Mpop_2119</name>
</gene>